<comment type="function">
    <text evidence="2 5 10">Catalyzes the first step of diphthamide biosynthesis, a post-translational modification of histidine which occurs in elongation factor 2 (PubMed:30877278). DPH1 and DPH2 transfer a 3-amino-3-carboxypropyl (ACP) group from S-adenosyl-L-methionine (SAM) to a histidine residue, the reaction is assisted by a reduction system comprising DPH3 and a NADH-dependent reductase (By similarity). Acts as a tumor suppressor (PubMed:10519411).</text>
</comment>
<comment type="catalytic activity">
    <reaction evidence="3">
        <text>L-histidyl-[translation elongation factor 2] + S-adenosyl-L-methionine = 2-[(3S)-amino-3-carboxypropyl]-L-histidyl-[translation elongation factor 2] + S-methyl-5'-thioadenosine + H(+)</text>
        <dbReference type="Rhea" id="RHEA:36783"/>
        <dbReference type="Rhea" id="RHEA-COMP:9748"/>
        <dbReference type="Rhea" id="RHEA-COMP:9749"/>
        <dbReference type="ChEBI" id="CHEBI:15378"/>
        <dbReference type="ChEBI" id="CHEBI:17509"/>
        <dbReference type="ChEBI" id="CHEBI:29979"/>
        <dbReference type="ChEBI" id="CHEBI:59789"/>
        <dbReference type="ChEBI" id="CHEBI:73995"/>
        <dbReference type="EC" id="2.5.1.108"/>
    </reaction>
</comment>
<comment type="cofactor">
    <cofactor evidence="2">
        <name>[4Fe-4S] cluster</name>
        <dbReference type="ChEBI" id="CHEBI:49883"/>
    </cofactor>
    <text evidence="2">Binds 1 [4Fe-4S] cluster per subunit. The cluster is coordinated with 3 cysteines and an exchangeable S-adenosyl-L-methionine.</text>
</comment>
<comment type="pathway">
    <text evidence="15">Protein modification; peptidyl-diphthamide biosynthesis.</text>
</comment>
<comment type="subunit">
    <text evidence="2 3 6">Component of the 2-(3-amino-3-carboxypropyl)histidine synthase complex composed of DPH1, DPH2, DPH3 and a NADH-dependent reductase (By similarity). Interacts with DPH2 (By similarity). Interacts with RBM8A (PubMed:11013075).</text>
</comment>
<comment type="interaction">
    <interactant intactId="EBI-10303200">
        <id>Q9BZG8</id>
    </interactant>
    <interactant intactId="EBI-717422">
        <id>Q12800</id>
        <label>TFCP2</label>
    </interactant>
    <organismsDiffer>false</organismsDiffer>
    <experiments>3</experiments>
</comment>
<comment type="subcellular location">
    <subcellularLocation>
        <location evidence="5">Nucleus</location>
    </subcellularLocation>
    <subcellularLocation>
        <location evidence="5">Cytoplasm</location>
    </subcellularLocation>
    <text evidence="5">Punctate, primarily perinuclear localization.</text>
</comment>
<comment type="alternative products">
    <event type="alternative splicing"/>
    <event type="alternative initiation"/>
    <isoform>
        <id>Q9BZG8-4</id>
        <name>4</name>
        <sequence type="displayed"/>
    </isoform>
    <isoform>
        <id>Q9BZG8-1</id>
        <name>1</name>
        <sequence type="described" ref="VSP_061761"/>
    </isoform>
    <isoform>
        <id>Q9BZG8-2</id>
        <name>2</name>
        <sequence type="described" ref="VSP_061760"/>
    </isoform>
    <isoform>
        <id>Q9BZG8-5</id>
        <name>5</name>
        <sequence type="described" ref="VSP_061761 VSP_061762 VSP_061763"/>
    </isoform>
</comment>
<comment type="tissue specificity">
    <text evidence="5 11">Expressed in heart, brain, placenta, lung, liver, skeletal muscle, kidney, pancreas, spleen, thymus, mammary gland, colon, small intestine, testis and ovary. Reduced expression in primary breast and ovarian tumors.</text>
</comment>
<comment type="disease" evidence="7 8 9 10">
    <disease id="DI-04703">
        <name>Developmental delay with short stature, dysmorphic facial features, and sparse hair 1</name>
        <acronym>DEDSSH1</acronym>
        <description>An autosomal recessive syndrome characterized by intellectual disability, short stature, and craniofacial and ectodermal anomalies including scaphocephaly with or without craniosynostosis, prominent forehead, sparse eyebrows and hair, hypoplastic toenails and, in some cases, dental anomalies.</description>
        <dbReference type="MIM" id="616901"/>
    </disease>
    <text>The disease is caused by variants affecting the gene represented in this entry.</text>
</comment>
<comment type="miscellaneous">
    <molecule>Isoform 5</molecule>
    <text evidence="15">May be produced at very low levels due to a premature stop codon in the mRNA, leading to non sense-mediated mRNA decay.</text>
</comment>
<comment type="similarity">
    <text evidence="15">Belongs to the DPH1/DPH2 family. DPH1 subfamily.</text>
</comment>
<comment type="sequence caution" evidence="15">
    <conflict type="erroneous translation">
        <sequence resource="EMBL-CDS" id="AAH96088"/>
    </conflict>
    <text>Wrong choice of frame.</text>
</comment>
<evidence type="ECO:0000250" key="1">
    <source>
        <dbReference type="UniProtKB" id="O58832"/>
    </source>
</evidence>
<evidence type="ECO:0000250" key="2">
    <source>
        <dbReference type="UniProtKB" id="P40487"/>
    </source>
</evidence>
<evidence type="ECO:0000250" key="3">
    <source>
        <dbReference type="UniProtKB" id="Q5NCQ5"/>
    </source>
</evidence>
<evidence type="ECO:0000256" key="4">
    <source>
        <dbReference type="SAM" id="MobiDB-lite"/>
    </source>
</evidence>
<evidence type="ECO:0000269" key="5">
    <source>
    </source>
</evidence>
<evidence type="ECO:0000269" key="6">
    <source>
    </source>
</evidence>
<evidence type="ECO:0000269" key="7">
    <source>
    </source>
</evidence>
<evidence type="ECO:0000269" key="8">
    <source>
    </source>
</evidence>
<evidence type="ECO:0000269" key="9">
    <source>
    </source>
</evidence>
<evidence type="ECO:0000269" key="10">
    <source>
    </source>
</evidence>
<evidence type="ECO:0000269" key="11">
    <source>
    </source>
</evidence>
<evidence type="ECO:0000303" key="12">
    <source>
    </source>
</evidence>
<evidence type="ECO:0000303" key="13">
    <source>
    </source>
</evidence>
<evidence type="ECO:0000303" key="14">
    <source>
    </source>
</evidence>
<evidence type="ECO:0000305" key="15"/>
<reference key="1">
    <citation type="journal article" date="1996" name="Cancer Lett.">
        <title>A cDNA from the ovarian cancer critical region of deletion on chromosome 17p13.3.</title>
        <authorList>
            <person name="Phillips N.J."/>
            <person name="Zeigler M.R."/>
            <person name="Deaven L.L."/>
        </authorList>
    </citation>
    <scope>NUCLEOTIDE SEQUENCE [MRNA] (ISOFORM 2)</scope>
</reference>
<reference key="2">
    <citation type="journal article" date="1996" name="Cancer Res.">
        <title>Identification of two candidate tumor suppressor genes on chromosome 17p13.3.</title>
        <authorList>
            <person name="Schultz D.C."/>
            <person name="Vanderveer L."/>
            <person name="Berman D.B."/>
            <person name="Hamilton T.C."/>
            <person name="Wong A.J."/>
            <person name="Godwin A.K."/>
        </authorList>
    </citation>
    <scope>NUCLEOTIDE SEQUENCE [MRNA] (ISOFORM 1)</scope>
    <scope>TISSUE SPECIFICITY</scope>
    <scope>VARIANT ARG-221</scope>
</reference>
<reference key="3">
    <citation type="journal article" date="2006" name="Nature">
        <title>DNA sequence of human chromosome 17 and analysis of rearrangement in the human lineage.</title>
        <authorList>
            <person name="Zody M.C."/>
            <person name="Garber M."/>
            <person name="Adams D.J."/>
            <person name="Sharpe T."/>
            <person name="Harrow J."/>
            <person name="Lupski J.R."/>
            <person name="Nicholson C."/>
            <person name="Searle S.M."/>
            <person name="Wilming L."/>
            <person name="Young S.K."/>
            <person name="Abouelleil A."/>
            <person name="Allen N.R."/>
            <person name="Bi W."/>
            <person name="Bloom T."/>
            <person name="Borowsky M.L."/>
            <person name="Bugalter B.E."/>
            <person name="Butler J."/>
            <person name="Chang J.L."/>
            <person name="Chen C.-K."/>
            <person name="Cook A."/>
            <person name="Corum B."/>
            <person name="Cuomo C.A."/>
            <person name="de Jong P.J."/>
            <person name="DeCaprio D."/>
            <person name="Dewar K."/>
            <person name="FitzGerald M."/>
            <person name="Gilbert J."/>
            <person name="Gibson R."/>
            <person name="Gnerre S."/>
            <person name="Goldstein S."/>
            <person name="Grafham D.V."/>
            <person name="Grocock R."/>
            <person name="Hafez N."/>
            <person name="Hagopian D.S."/>
            <person name="Hart E."/>
            <person name="Norman C.H."/>
            <person name="Humphray S."/>
            <person name="Jaffe D.B."/>
            <person name="Jones M."/>
            <person name="Kamal M."/>
            <person name="Khodiyar V.K."/>
            <person name="LaButti K."/>
            <person name="Laird G."/>
            <person name="Lehoczky J."/>
            <person name="Liu X."/>
            <person name="Lokyitsang T."/>
            <person name="Loveland J."/>
            <person name="Lui A."/>
            <person name="Macdonald P."/>
            <person name="Major J.E."/>
            <person name="Matthews L."/>
            <person name="Mauceli E."/>
            <person name="McCarroll S.A."/>
            <person name="Mihalev A.H."/>
            <person name="Mudge J."/>
            <person name="Nguyen C."/>
            <person name="Nicol R."/>
            <person name="O'Leary S.B."/>
            <person name="Osoegawa K."/>
            <person name="Schwartz D.C."/>
            <person name="Shaw-Smith C."/>
            <person name="Stankiewicz P."/>
            <person name="Steward C."/>
            <person name="Swarbreck D."/>
            <person name="Venkataraman V."/>
            <person name="Whittaker C.A."/>
            <person name="Yang X."/>
            <person name="Zimmer A.R."/>
            <person name="Bradley A."/>
            <person name="Hubbard T."/>
            <person name="Birren B.W."/>
            <person name="Rogers J."/>
            <person name="Lander E.S."/>
            <person name="Nusbaum C."/>
        </authorList>
    </citation>
    <scope>NUCLEOTIDE SEQUENCE [LARGE SCALE GENOMIC DNA]</scope>
</reference>
<reference key="4">
    <citation type="submission" date="2005-09" db="EMBL/GenBank/DDBJ databases">
        <authorList>
            <person name="Mural R.J."/>
            <person name="Istrail S."/>
            <person name="Sutton G.G."/>
            <person name="Florea L."/>
            <person name="Halpern A.L."/>
            <person name="Mobarry C.M."/>
            <person name="Lippert R."/>
            <person name="Walenz B."/>
            <person name="Shatkay H."/>
            <person name="Dew I."/>
            <person name="Miller J.R."/>
            <person name="Flanigan M.J."/>
            <person name="Edwards N.J."/>
            <person name="Bolanos R."/>
            <person name="Fasulo D."/>
            <person name="Halldorsson B.V."/>
            <person name="Hannenhalli S."/>
            <person name="Turner R."/>
            <person name="Yooseph S."/>
            <person name="Lu F."/>
            <person name="Nusskern D.R."/>
            <person name="Shue B.C."/>
            <person name="Zheng X.H."/>
            <person name="Zhong F."/>
            <person name="Delcher A.L."/>
            <person name="Huson D.H."/>
            <person name="Kravitz S.A."/>
            <person name="Mouchard L."/>
            <person name="Reinert K."/>
            <person name="Remington K.A."/>
            <person name="Clark A.G."/>
            <person name="Waterman M.S."/>
            <person name="Eichler E.E."/>
            <person name="Adams M.D."/>
            <person name="Hunkapiller M.W."/>
            <person name="Myers E.W."/>
            <person name="Venter J.C."/>
        </authorList>
    </citation>
    <scope>NUCLEOTIDE SEQUENCE [LARGE SCALE GENOMIC DNA]</scope>
</reference>
<reference key="5">
    <citation type="journal article" date="2004" name="Genome Res.">
        <title>The status, quality, and expansion of the NIH full-length cDNA project: the Mammalian Gene Collection (MGC).</title>
        <authorList>
            <consortium name="The MGC Project Team"/>
        </authorList>
    </citation>
    <scope>NUCLEOTIDE SEQUENCE [LARGE SCALE MRNA] OF 3-438 (ISOFORM 4)</scope>
    <scope>NUCLEOTIDE SEQUENCE [LARGE SCALE MRNA] OF 3-215 (ISOFORM 5)</scope>
    <source>
        <tissue>Brain</tissue>
    </source>
</reference>
<reference key="6">
    <citation type="submission" date="2004-10" db="EMBL/GenBank/DDBJ databases">
        <title>Cloning of human full-length CDSs in BD Creator(TM) system donor vector.</title>
        <authorList>
            <person name="Kalnine N."/>
            <person name="Chen X."/>
            <person name="Rolfs A."/>
            <person name="Halleck A."/>
            <person name="Hines L."/>
            <person name="Eisenstein S."/>
            <person name="Koundinya M."/>
            <person name="Raphael J."/>
            <person name="Moreira D."/>
            <person name="Kelley T."/>
            <person name="LaBaer J."/>
            <person name="Lin Y."/>
            <person name="Phelan M."/>
            <person name="Farmer A."/>
        </authorList>
    </citation>
    <scope>NUCLEOTIDE SEQUENCE [LARGE SCALE MRNA] (ISOFORM 2)</scope>
</reference>
<reference key="7">
    <citation type="journal article" date="1999" name="Cancer Res.">
        <title>Expression of OVCA1, a candidate tumor suppressor, is reduced in tumors and inhibits growth of ovarian cancer cells.</title>
        <authorList>
            <person name="Bruening W."/>
            <person name="Prowse A.H."/>
            <person name="Schultz D.C."/>
            <person name="Holgado-Madruga M."/>
            <person name="Wong A."/>
            <person name="Godwin A.K."/>
        </authorList>
    </citation>
    <scope>FUNCTION</scope>
    <scope>VARIANTS VAL-2; ASP-29; VAL-330 AND ARG-384</scope>
    <scope>SUBCELLULAR LOCATION</scope>
    <scope>TISSUE SPECIFICITY</scope>
</reference>
<reference key="8">
    <citation type="journal article" date="2000" name="Genomics">
        <title>Identification and structural analysis of human RBM8A and RBM8B: two highly conserved RNA-binding motif proteins that interact with OVCA1, a candidate tumor suppressor.</title>
        <authorList>
            <person name="Salicioni A.M."/>
            <person name="Xi M."/>
            <person name="Vanderveer L.A."/>
            <person name="Balsara B."/>
            <person name="Testa J.R."/>
            <person name="Dunbrack R.L. Jr."/>
            <person name="Godwin A.K."/>
        </authorList>
    </citation>
    <scope>INTERACTION WITH RBM8A</scope>
</reference>
<reference key="9">
    <citation type="journal article" date="2015" name="Cell Rep.">
        <title>Accelerating novel candidate gene discovery in neurogenetic disorders via whole-exome sequencing of prescreened multiplex consanguineous families.</title>
        <authorList>
            <person name="Alazami A.M."/>
            <person name="Patel N."/>
            <person name="Shamseldin H.E."/>
            <person name="Anazi S."/>
            <person name="Al-Dosari M.S."/>
            <person name="Alzahrani F."/>
            <person name="Hijazi H."/>
            <person name="Alshammari M."/>
            <person name="Aldahmesh M.A."/>
            <person name="Salih M.A."/>
            <person name="Faqeih E."/>
            <person name="Alhashem A."/>
            <person name="Bashiri F.A."/>
            <person name="Al-Owain M."/>
            <person name="Kentab A.Y."/>
            <person name="Sogaty S."/>
            <person name="Al Tala S."/>
            <person name="Temsah M.H."/>
            <person name="Tulbah M."/>
            <person name="Aljelaify R.F."/>
            <person name="Alshahwan S.A."/>
            <person name="Seidahmed M.Z."/>
            <person name="Alhadid A.A."/>
            <person name="Aldhalaan H."/>
            <person name="Alqallaf F."/>
            <person name="Kurdi W."/>
            <person name="Alfadhel M."/>
            <person name="Babay Z."/>
            <person name="Alsogheer M."/>
            <person name="Kaya N."/>
            <person name="Al-Hassnan Z.N."/>
            <person name="Abdel-Salam G.M."/>
            <person name="Al-Sannaa N."/>
            <person name="Al Mutairi F."/>
            <person name="El Khashab H.Y."/>
            <person name="Bohlega S."/>
            <person name="Jia X."/>
            <person name="Nguyen H.C."/>
            <person name="Hammami R."/>
            <person name="Adly N."/>
            <person name="Mohamed J.Y."/>
            <person name="Abdulwahab F."/>
            <person name="Ibrahim N."/>
            <person name="Naim E.A."/>
            <person name="Al-Younes B."/>
            <person name="Meyer B.F."/>
            <person name="Hashem M."/>
            <person name="Shaheen R."/>
            <person name="Xiong Y."/>
            <person name="Abouelhoda M."/>
            <person name="Aldeeri A.A."/>
            <person name="Monies D.M."/>
            <person name="Alkuraya F.S."/>
        </authorList>
    </citation>
    <scope>INVOLVEMENT IN DEDSSH1</scope>
    <scope>VARIANT DEDSSH1 PRO-229</scope>
</reference>
<reference key="10">
    <citation type="journal article" date="2015" name="Hum. Mutat.">
        <title>Matching two independent cohorts validates DPH1 as a gene responsible for autosomal recessive intellectual disability with short stature, craniofacial, and ectodermal anomalies.</title>
        <authorList>
            <person name="Loucks C.M."/>
            <person name="Parboosingh J.S."/>
            <person name="Shaheen R."/>
            <person name="Bernier F.P."/>
            <person name="McLeod D.R."/>
            <person name="Seidahmed M.Z."/>
            <person name="Puffenberger E.G."/>
            <person name="Ober C."/>
            <person name="Hegele R.A."/>
            <person name="Boycott K.M."/>
            <person name="Alkuraya F.S."/>
            <person name="Innes A.M."/>
        </authorList>
    </citation>
    <scope>INVOLVEMENT IN DEDSSH1</scope>
    <scope>VARIANT DEDSSH1 LYS-6 (ISOFORM 1)</scope>
</reference>
<reference key="11">
    <citation type="journal article" date="2018" name="J. Hum. Genet.">
        <title>Novel compound heterozygous DPH1 mutations in a patient with the unique clinical features of airway obstruction and external genital abnormalities.</title>
        <authorList>
            <person name="Nakajima J."/>
            <person name="Oana S."/>
            <person name="Sakaguchi T."/>
            <person name="Nakashima M."/>
            <person name="Numabe H."/>
            <person name="Kawashima H."/>
            <person name="Matsumoto N."/>
            <person name="Miyake N."/>
        </authorList>
    </citation>
    <scope>VARIANT DEDSSH1 PRO-159</scope>
</reference>
<reference key="12">
    <citation type="journal article" date="2020" name="Eur. J. Hum. Genet.">
        <title>DPH1 syndrome: two novel variants and structural and functional analyses of seven missense variants identified in syndromic patients.</title>
        <authorList>
            <person name="Urreizti R."/>
            <person name="Mayer K."/>
            <person name="Evrony G.D."/>
            <person name="Said E."/>
            <person name="Castilla-Vallmanya L."/>
            <person name="Cody N.A.L."/>
            <person name="Plasencia G."/>
            <person name="Gelb B.D."/>
            <person name="Grinberg D."/>
            <person name="Brinkmann U."/>
            <person name="Webb B.D."/>
            <person name="Balcells S."/>
        </authorList>
    </citation>
    <scope>CHARACTERIZATION OF VARIANTS DEDSSH1 LYS-6 (ISOFORM 1)</scope>
    <scope>CHARACTERIZATION OF VARIANTS DEDSSH1 CYS-107; PRO-120 AND PRO-159</scope>
    <scope>VARIANTS DEDSSH1 CYS-107 AND PRO-120</scope>
    <scope>FUNCTION</scope>
</reference>
<accession>Q9BZG8</accession>
<accession>A0A6Q8JGF9</accession>
<accession>D3DTI3</accession>
<accession>Q16439</accession>
<accession>Q4VBA2</accession>
<accession>Q9BTW7</accession>
<accession>Q9UCY0</accession>
<name>DPH1_HUMAN</name>
<proteinExistence type="evidence at protein level"/>
<gene>
    <name evidence="12" type="primary">DPH1</name>
    <name evidence="13" type="synonym">DPH2L</name>
    <name type="synonym">DPH2L1</name>
    <name evidence="14" type="synonym">OVCA1</name>
</gene>
<feature type="chain" id="PRO_0000307882" description="2-(3-amino-3-carboxypropyl)histidine synthase subunit 1">
    <location>
        <begin position="1"/>
        <end position="438"/>
    </location>
</feature>
<feature type="region of interest" description="Disordered" evidence="4">
    <location>
        <begin position="7"/>
        <end position="29"/>
    </location>
</feature>
<feature type="region of interest" description="Disordered" evidence="4">
    <location>
        <begin position="391"/>
        <end position="421"/>
    </location>
</feature>
<feature type="binding site" evidence="1">
    <location>
        <position position="110"/>
    </location>
    <ligand>
        <name>[4Fe-4S] cluster</name>
        <dbReference type="ChEBI" id="CHEBI:49883"/>
    </ligand>
</feature>
<feature type="binding site" evidence="1">
    <location>
        <position position="214"/>
    </location>
    <ligand>
        <name>[4Fe-4S] cluster</name>
        <dbReference type="ChEBI" id="CHEBI:49883"/>
    </ligand>
</feature>
<feature type="binding site" evidence="1">
    <location>
        <position position="342"/>
    </location>
    <ligand>
        <name>[4Fe-4S] cluster</name>
        <dbReference type="ChEBI" id="CHEBI:49883"/>
    </ligand>
</feature>
<feature type="splice variant" id="VSP_061760" description="In isoform 2.">
    <location>
        <begin position="1"/>
        <end position="75"/>
    </location>
</feature>
<feature type="splice variant" id="VSP_061761" description="In isoform 1 and isoform 5.">
    <original>M</original>
    <variation>MRRQVM</variation>
    <location>
        <position position="1"/>
    </location>
</feature>
<feature type="splice variant" id="VSP_061762" description="In isoform 5.">
    <original>RFTEAEVMVMGDVTYGACCVDDFTARALGADFLVHYGHSCLIPMDTSAQDFRVLYVFVDIRIDTTHLLDSLRLTFPPATALALVSTIQFVSTLQAAAQELKAEYRVSVPQCKPLSPGE</original>
    <variation>SSHGHLGPRLPGAVRLCGHPDRHYTPPGLSPPHLSPSHCPCPGQHHSVCVDLAGSRPGAESRVSCECPTVQAPVPWRDPGLHIPPTVQRGGGRCVSWRWPLPSGVCHDCQPQCPRLPV</variation>
    <location>
        <begin position="93"/>
        <end position="210"/>
    </location>
</feature>
<feature type="splice variant" id="VSP_061763" description="In isoform 5.">
    <location>
        <begin position="211"/>
        <end position="438"/>
    </location>
</feature>
<feature type="sequence variant" id="VAR_036702" description="In breast and ovarian cancer; dbSNP:rs778705666." evidence="5">
    <original>A</original>
    <variation>V</variation>
    <location>
        <position position="2"/>
    </location>
</feature>
<feature type="sequence variant" id="VAR_036703" description="In breast and ovarian cancer." evidence="5">
    <original>A</original>
    <variation>D</variation>
    <location>
        <position position="29"/>
    </location>
</feature>
<feature type="sequence variant" id="VAR_059255" description="In dbSNP:rs8070453.">
    <original>I</original>
    <variation>M</variation>
    <location>
        <position position="46"/>
    </location>
</feature>
<feature type="sequence variant" id="VAR_086296" description="In DEDSSH1; impairs diphthamide modification of elongation factor 2; dbSNP:rs772969956." evidence="10">
    <original>Y</original>
    <variation>C</variation>
    <location>
        <position position="107"/>
    </location>
</feature>
<feature type="sequence variant" id="VAR_086297" description="In DEDSSH1; impairs diphthamide modification of elongation factor 2; dbSNP:rs200530055." evidence="10">
    <original>L</original>
    <variation>P</variation>
    <location>
        <position position="120"/>
    </location>
</feature>
<feature type="sequence variant" id="VAR_086298" description="In DEDSSH1; impairs diphthamide modification of elongation factor 2; dbSNP:rs2067429826." evidence="9 10">
    <original>L</original>
    <variation>P</variation>
    <location>
        <position position="159"/>
    </location>
</feature>
<feature type="sequence variant" id="VAR_055706" description="In dbSNP:rs1131600." evidence="11">
    <original>K</original>
    <variation>R</variation>
    <location>
        <position position="221"/>
    </location>
</feature>
<feature type="sequence variant" id="VAR_076413" description="In DEDSSH1; impairs diphthamide modification of elongation factor 2.; dbSNP:rs730882250." evidence="7">
    <original>L</original>
    <variation>P</variation>
    <location>
        <position position="229"/>
    </location>
</feature>
<feature type="sequence variant" id="VAR_036704" description="In breast and ovarian cancer; requires 2 nucleotide substitutions; dbSNP:rs35394823." evidence="5">
    <original>L</original>
    <variation>V</variation>
    <location>
        <position position="330"/>
    </location>
</feature>
<feature type="sequence variant" id="VAR_036705" description="In breast and ovarian cancer." evidence="5">
    <original>S</original>
    <variation>R</variation>
    <location>
        <position position="384"/>
    </location>
</feature>
<feature type="sequence conflict" description="In Ref. 2; AAK13428." evidence="15" ref="2">
    <original>A</original>
    <variation>V</variation>
    <location>
        <position position="3"/>
    </location>
</feature>
<feature type="sequence conflict" description="In Ref. 5; AAH96088." evidence="15" ref="5">
    <original>T</original>
    <variation>I</variation>
    <location>
        <position position="157"/>
    </location>
</feature>
<feature type="sequence conflict" description="In Ref. 1; AAD10198/AAB36297." evidence="15" ref="1">
    <original>F</original>
    <variation>S</variation>
    <location>
        <position position="353"/>
    </location>
</feature>
<feature type="sequence variant" id="VAR_087452" description="In DEDSSH1; normal diphthamide modification of elongation factor 2; dbSNP:rs757167361." evidence="8 10">
    <original>M</original>
    <variation>K</variation>
    <location sequence="Q9BZG8-1">
        <position position="6"/>
    </location>
</feature>
<sequence length="438" mass="48134">MAALVVSGAAEQGGRDGPGRGRAPRGRVANQIPPEILKNPQLQAAIRVLPSNYNFEIPKTIWRIQQAQAKKVALQMPEGLLLFACTIVDILERFTEAEVMVMGDVTYGACCVDDFTARALGADFLVHYGHSCLIPMDTSAQDFRVLYVFVDIRIDTTHLLDSLRLTFPPATALALVSTIQFVSTLQAAAQELKAEYRVSVPQCKPLSPGEILGCTSPRLSKEVEAVVYLGDGRFHLESVMIANPNVPAYRYDPYSKVLSREHYDHQRMQAARQEAIATARSAKSWGLILGTLGRQGSPKILEHLESRLRALGLSFVRLLLSEIFPSKLSLLPEVDVWVQVACPRLSIDWGTAFPKPLLTPYEAAVALRDISWQQPYPMDFYAGSSLGPWTVNHGQDRRPHAPGRPARGKVQEGSARPPSAVACEDCSCRDEKVAPLAP</sequence>
<keyword id="KW-0024">Alternative initiation</keyword>
<keyword id="KW-0025">Alternative splicing</keyword>
<keyword id="KW-0963">Cytoplasm</keyword>
<keyword id="KW-0225">Disease variant</keyword>
<keyword id="KW-0242">Dwarfism</keyword>
<keyword id="KW-0038">Ectodermal dysplasia</keyword>
<keyword id="KW-1063">Hypotrichosis</keyword>
<keyword id="KW-0991">Intellectual disability</keyword>
<keyword id="KW-0408">Iron</keyword>
<keyword id="KW-0411">Iron-sulfur</keyword>
<keyword id="KW-0479">Metal-binding</keyword>
<keyword id="KW-0539">Nucleus</keyword>
<keyword id="KW-1267">Proteomics identification</keyword>
<keyword id="KW-1185">Reference proteome</keyword>
<keyword id="KW-0949">S-adenosyl-L-methionine</keyword>
<keyword id="KW-0808">Transferase</keyword>
<keyword id="KW-0043">Tumor suppressor</keyword>
<protein>
    <recommendedName>
        <fullName evidence="15">2-(3-amino-3-carboxypropyl)histidine synthase subunit 1</fullName>
        <ecNumber evidence="3">2.5.1.108</ecNumber>
    </recommendedName>
    <alternativeName>
        <fullName evidence="15">Diphthamide biosynthesis protein 1</fullName>
    </alternativeName>
    <alternativeName>
        <fullName evidence="15">Diphtheria toxin resistance protein 1</fullName>
    </alternativeName>
    <alternativeName>
        <fullName evidence="15">Ovarian cancer-associated gene 1 protein</fullName>
    </alternativeName>
    <alternativeName>
        <fullName evidence="15">S-adenosyl-L-methionine:L-histidine 3-amino-3-carboxypropyltransferase 1</fullName>
    </alternativeName>
</protein>
<dbReference type="EC" id="2.5.1.108" evidence="3"/>
<dbReference type="EMBL" id="S81752">
    <property type="protein sequence ID" value="AAB36297.1"/>
    <property type="molecule type" value="mRNA"/>
</dbReference>
<dbReference type="EMBL" id="U34880">
    <property type="protein sequence ID" value="AAD10198.1"/>
    <property type="molecule type" value="mRNA"/>
</dbReference>
<dbReference type="EMBL" id="AF321876">
    <property type="protein sequence ID" value="AAK13428.1"/>
    <property type="molecule type" value="mRNA"/>
</dbReference>
<dbReference type="EMBL" id="AC090617">
    <property type="status" value="NOT_ANNOTATED_CDS"/>
    <property type="molecule type" value="Genomic_DNA"/>
</dbReference>
<dbReference type="EMBL" id="AC099684">
    <property type="status" value="NOT_ANNOTATED_CDS"/>
    <property type="molecule type" value="Genomic_DNA"/>
</dbReference>
<dbReference type="EMBL" id="CH471108">
    <property type="protein sequence ID" value="EAW90567.1"/>
    <property type="molecule type" value="Genomic_DNA"/>
</dbReference>
<dbReference type="EMBL" id="CH471108">
    <property type="protein sequence ID" value="EAW90569.1"/>
    <property type="molecule type" value="Genomic_DNA"/>
</dbReference>
<dbReference type="EMBL" id="BC003099">
    <property type="protein sequence ID" value="AAH03099.2"/>
    <property type="molecule type" value="mRNA"/>
</dbReference>
<dbReference type="EMBL" id="BC096088">
    <property type="protein sequence ID" value="AAH96088.1"/>
    <property type="status" value="ALT_SEQ"/>
    <property type="molecule type" value="mRNA"/>
</dbReference>
<dbReference type="EMBL" id="BT019878">
    <property type="protein sequence ID" value="AAV38681.1"/>
    <property type="molecule type" value="mRNA"/>
</dbReference>
<dbReference type="CCDS" id="CCDS42228.2">
    <molecule id="Q9BZG8-4"/>
</dbReference>
<dbReference type="RefSeq" id="NP_001333505.1">
    <property type="nucleotide sequence ID" value="NM_001346576.1"/>
</dbReference>
<dbReference type="RefSeq" id="NP_001374.4">
    <molecule id="Q9BZG8-4"/>
    <property type="nucleotide sequence ID" value="NM_001383.6"/>
</dbReference>
<dbReference type="SMR" id="Q9BZG8"/>
<dbReference type="BioGRID" id="108135">
    <property type="interactions" value="65"/>
</dbReference>
<dbReference type="ComplexPortal" id="CPX-7849">
    <property type="entry name" value="2-(3-amino-3-carboxypropyl)histidine synthase complex"/>
</dbReference>
<dbReference type="FunCoup" id="Q9BZG8">
    <property type="interactions" value="2242"/>
</dbReference>
<dbReference type="IntAct" id="Q9BZG8">
    <property type="interactions" value="37"/>
</dbReference>
<dbReference type="STRING" id="9606.ENSP00000263083"/>
<dbReference type="iPTMnet" id="Q9BZG8"/>
<dbReference type="PhosphoSitePlus" id="Q9BZG8"/>
<dbReference type="BioMuta" id="DPH1"/>
<dbReference type="DMDM" id="269849559"/>
<dbReference type="jPOST" id="Q9BZG8"/>
<dbReference type="MassIVE" id="Q9BZG8"/>
<dbReference type="PaxDb" id="9606-ENSP00000263083"/>
<dbReference type="PeptideAtlas" id="Q9BZG8"/>
<dbReference type="ProteomicsDB" id="79843">
    <molecule id="Q9BZG8-1"/>
</dbReference>
<dbReference type="ProteomicsDB" id="79844">
    <molecule id="Q9BZG8-2"/>
</dbReference>
<dbReference type="Pumba" id="Q9BZG8"/>
<dbReference type="Antibodypedia" id="22821">
    <property type="antibodies" value="206 antibodies from 24 providers"/>
</dbReference>
<dbReference type="DNASU" id="1801"/>
<dbReference type="Ensembl" id="ENST00000263083.12">
    <molecule id="Q9BZG8-4"/>
    <property type="protein sequence ID" value="ENSP00000263083.7"/>
    <property type="gene ID" value="ENSG00000108963.19"/>
</dbReference>
<dbReference type="Ensembl" id="ENST00000570477.6">
    <molecule id="Q9BZG8-2"/>
    <property type="protein sequence ID" value="ENSP00000458726.1"/>
    <property type="gene ID" value="ENSG00000108963.19"/>
</dbReference>
<dbReference type="Ensembl" id="ENST00000674200.2">
    <molecule id="Q9BZG8-1"/>
    <property type="protein sequence ID" value="ENSP00000501368.1"/>
    <property type="gene ID" value="ENSG00000108963.19"/>
</dbReference>
<dbReference type="GeneID" id="1801"/>
<dbReference type="KEGG" id="hsa:1801"/>
<dbReference type="MANE-Select" id="ENST00000263083.12">
    <property type="protein sequence ID" value="ENSP00000263083.7"/>
    <property type="RefSeq nucleotide sequence ID" value="NM_001383.6"/>
    <property type="RefSeq protein sequence ID" value="NP_001374.4"/>
</dbReference>
<dbReference type="UCSC" id="uc002fts.4">
    <molecule id="Q9BZG8-4"/>
    <property type="organism name" value="human"/>
</dbReference>
<dbReference type="AGR" id="HGNC:3003"/>
<dbReference type="CTD" id="1801"/>
<dbReference type="DisGeNET" id="1801"/>
<dbReference type="GeneCards" id="DPH1"/>
<dbReference type="HGNC" id="HGNC:3003">
    <property type="gene designation" value="DPH1"/>
</dbReference>
<dbReference type="HPA" id="ENSG00000108963">
    <property type="expression patterns" value="Low tissue specificity"/>
</dbReference>
<dbReference type="MalaCards" id="DPH1"/>
<dbReference type="MIM" id="603527">
    <property type="type" value="gene"/>
</dbReference>
<dbReference type="MIM" id="616901">
    <property type="type" value="phenotype"/>
</dbReference>
<dbReference type="neXtProt" id="NX_Q9BZG8"/>
<dbReference type="OpenTargets" id="ENSG00000108963"/>
<dbReference type="Orphanet" id="459061">
    <property type="disease" value="Craniofacial dysplasia-short stature-ectodermal anomalies-intellectual disability syndrome"/>
</dbReference>
<dbReference type="PharmGKB" id="PA27461"/>
<dbReference type="VEuPathDB" id="HostDB:ENSG00000108963"/>
<dbReference type="eggNOG" id="KOG2648">
    <property type="taxonomic scope" value="Eukaryota"/>
</dbReference>
<dbReference type="GeneTree" id="ENSGT00940000153694"/>
<dbReference type="HOGENOM" id="CLU_037146_1_1_1"/>
<dbReference type="InParanoid" id="Q9BZG8"/>
<dbReference type="OMA" id="PGQVLGC"/>
<dbReference type="OrthoDB" id="1649088at2759"/>
<dbReference type="PAN-GO" id="Q9BZG8">
    <property type="GO annotations" value="1 GO annotation based on evolutionary models"/>
</dbReference>
<dbReference type="PhylomeDB" id="Q9BZG8"/>
<dbReference type="TreeFam" id="TF105746"/>
<dbReference type="PathwayCommons" id="Q9BZG8"/>
<dbReference type="Reactome" id="R-HSA-5358493">
    <property type="pathway name" value="Synthesis of diphthamide-EEF2"/>
</dbReference>
<dbReference type="SignaLink" id="Q9BZG8"/>
<dbReference type="UniPathway" id="UPA00559"/>
<dbReference type="BioGRID-ORCS" id="1801">
    <property type="hits" value="285 hits in 1165 CRISPR screens"/>
</dbReference>
<dbReference type="ChiTaRS" id="DPH1">
    <property type="organism name" value="human"/>
</dbReference>
<dbReference type="GeneWiki" id="DPH1"/>
<dbReference type="GenomeRNAi" id="1801"/>
<dbReference type="Pharos" id="Q9BZG8">
    <property type="development level" value="Tbio"/>
</dbReference>
<dbReference type="PRO" id="PR:Q9BZG8"/>
<dbReference type="Proteomes" id="UP000005640">
    <property type="component" value="Chromosome 17"/>
</dbReference>
<dbReference type="RNAct" id="Q9BZG8">
    <property type="molecule type" value="protein"/>
</dbReference>
<dbReference type="Bgee" id="ENSG00000108963">
    <property type="expression patterns" value="Expressed in pituitary gland and 97 other cell types or tissues"/>
</dbReference>
<dbReference type="ExpressionAtlas" id="Q9BZG8">
    <property type="expression patterns" value="baseline and differential"/>
</dbReference>
<dbReference type="GO" id="GO:0120513">
    <property type="term" value="C:2-(3-amino-3-carboxypropyl)histidine synthase complex"/>
    <property type="evidence" value="ECO:0000250"/>
    <property type="project" value="UniProtKB"/>
</dbReference>
<dbReference type="GO" id="GO:0030054">
    <property type="term" value="C:cell junction"/>
    <property type="evidence" value="ECO:0000314"/>
    <property type="project" value="HPA"/>
</dbReference>
<dbReference type="GO" id="GO:0005829">
    <property type="term" value="C:cytosol"/>
    <property type="evidence" value="ECO:0000304"/>
    <property type="project" value="Reactome"/>
</dbReference>
<dbReference type="GO" id="GO:0005654">
    <property type="term" value="C:nucleoplasm"/>
    <property type="evidence" value="ECO:0000314"/>
    <property type="project" value="HPA"/>
</dbReference>
<dbReference type="GO" id="GO:0090560">
    <property type="term" value="F:2-(3-amino-3-carboxypropyl)histidine synthase activity"/>
    <property type="evidence" value="ECO:0007669"/>
    <property type="project" value="UniProtKB-EC"/>
</dbReference>
<dbReference type="GO" id="GO:0051539">
    <property type="term" value="F:4 iron, 4 sulfur cluster binding"/>
    <property type="evidence" value="ECO:0000250"/>
    <property type="project" value="UniProtKB"/>
</dbReference>
<dbReference type="GO" id="GO:0046872">
    <property type="term" value="F:metal ion binding"/>
    <property type="evidence" value="ECO:0007669"/>
    <property type="project" value="UniProtKB-KW"/>
</dbReference>
<dbReference type="GO" id="GO:0048144">
    <property type="term" value="P:fibroblast proliferation"/>
    <property type="evidence" value="ECO:0007669"/>
    <property type="project" value="Ensembl"/>
</dbReference>
<dbReference type="GO" id="GO:0017183">
    <property type="term" value="P:protein histidyl modification to diphthamide"/>
    <property type="evidence" value="ECO:0000250"/>
    <property type="project" value="UniProtKB"/>
</dbReference>
<dbReference type="FunFam" id="3.40.50.11840:FF:000001">
    <property type="entry name" value="2-(3-amino-3-carboxypropyl)histidine synthase subunit 1"/>
    <property type="match status" value="1"/>
</dbReference>
<dbReference type="FunFam" id="3.40.50.11850:FF:000001">
    <property type="entry name" value="2-(3-amino-3-carboxypropyl)histidine synthase subunit 1"/>
    <property type="match status" value="1"/>
</dbReference>
<dbReference type="FunFam" id="3.40.50.11860:FF:000002">
    <property type="entry name" value="2-(3-amino-3-carboxypropyl)histidine synthase subunit 1"/>
    <property type="match status" value="1"/>
</dbReference>
<dbReference type="Gene3D" id="3.40.50.11840">
    <property type="entry name" value="Diphthamide synthesis DPH1/DPH2 domain 1"/>
    <property type="match status" value="1"/>
</dbReference>
<dbReference type="Gene3D" id="3.40.50.11850">
    <property type="entry name" value="Diphthamide synthesis DPH1/DPH2 domain 2"/>
    <property type="match status" value="1"/>
</dbReference>
<dbReference type="Gene3D" id="3.40.50.11860">
    <property type="entry name" value="Diphthamide synthesis DPH1/DPH2 domain 3"/>
    <property type="match status" value="1"/>
</dbReference>
<dbReference type="InterPro" id="IPR016435">
    <property type="entry name" value="DPH1/DPH2"/>
</dbReference>
<dbReference type="InterPro" id="IPR042263">
    <property type="entry name" value="DPH1/DPH2_1"/>
</dbReference>
<dbReference type="InterPro" id="IPR042264">
    <property type="entry name" value="DPH1/DPH2_2"/>
</dbReference>
<dbReference type="InterPro" id="IPR042265">
    <property type="entry name" value="DPH1/DPH2_3"/>
</dbReference>
<dbReference type="NCBIfam" id="TIGR00322">
    <property type="entry name" value="diphth2_R"/>
    <property type="match status" value="1"/>
</dbReference>
<dbReference type="PANTHER" id="PTHR10762:SF1">
    <property type="entry name" value="2-(3-AMINO-3-CARBOXYPROPYL)HISTIDINE SYNTHASE SUBUNIT 1"/>
    <property type="match status" value="1"/>
</dbReference>
<dbReference type="PANTHER" id="PTHR10762">
    <property type="entry name" value="DIPHTHAMIDE BIOSYNTHESIS PROTEIN"/>
    <property type="match status" value="1"/>
</dbReference>
<dbReference type="Pfam" id="PF01866">
    <property type="entry name" value="Diphthamide_syn"/>
    <property type="match status" value="1"/>
</dbReference>
<dbReference type="SFLD" id="SFLDG01121">
    <property type="entry name" value="Diphthamide_biosynthesis"/>
    <property type="match status" value="1"/>
</dbReference>
<dbReference type="SFLD" id="SFLDS00032">
    <property type="entry name" value="Radical_SAM_3-amino-3-carboxyp"/>
    <property type="match status" value="1"/>
</dbReference>
<organism>
    <name type="scientific">Homo sapiens</name>
    <name type="common">Human</name>
    <dbReference type="NCBI Taxonomy" id="9606"/>
    <lineage>
        <taxon>Eukaryota</taxon>
        <taxon>Metazoa</taxon>
        <taxon>Chordata</taxon>
        <taxon>Craniata</taxon>
        <taxon>Vertebrata</taxon>
        <taxon>Euteleostomi</taxon>
        <taxon>Mammalia</taxon>
        <taxon>Eutheria</taxon>
        <taxon>Euarchontoglires</taxon>
        <taxon>Primates</taxon>
        <taxon>Haplorrhini</taxon>
        <taxon>Catarrhini</taxon>
        <taxon>Hominidae</taxon>
        <taxon>Homo</taxon>
    </lineage>
</organism>